<accession>Q97QP9</accession>
<reference key="1">
    <citation type="journal article" date="2001" name="Science">
        <title>Complete genome sequence of a virulent isolate of Streptococcus pneumoniae.</title>
        <authorList>
            <person name="Tettelin H."/>
            <person name="Nelson K.E."/>
            <person name="Paulsen I.T."/>
            <person name="Eisen J.A."/>
            <person name="Read T.D."/>
            <person name="Peterson S.N."/>
            <person name="Heidelberg J.F."/>
            <person name="DeBoy R.T."/>
            <person name="Haft D.H."/>
            <person name="Dodson R.J."/>
            <person name="Durkin A.S."/>
            <person name="Gwinn M.L."/>
            <person name="Kolonay J.F."/>
            <person name="Nelson W.C."/>
            <person name="Peterson J.D."/>
            <person name="Umayam L.A."/>
            <person name="White O."/>
            <person name="Salzberg S.L."/>
            <person name="Lewis M.R."/>
            <person name="Radune D."/>
            <person name="Holtzapple E.K."/>
            <person name="Khouri H.M."/>
            <person name="Wolf A.M."/>
            <person name="Utterback T.R."/>
            <person name="Hansen C.L."/>
            <person name="McDonald L.A."/>
            <person name="Feldblyum T.V."/>
            <person name="Angiuoli S.V."/>
            <person name="Dickinson T."/>
            <person name="Hickey E.K."/>
            <person name="Holt I.E."/>
            <person name="Loftus B.J."/>
            <person name="Yang F."/>
            <person name="Smith H.O."/>
            <person name="Venter J.C."/>
            <person name="Dougherty B.A."/>
            <person name="Morrison D.A."/>
            <person name="Hollingshead S.K."/>
            <person name="Fraser C.M."/>
        </authorList>
    </citation>
    <scope>NUCLEOTIDE SEQUENCE [LARGE SCALE GENOMIC DNA]</scope>
    <source>
        <strain>ATCC BAA-334 / TIGR4</strain>
    </source>
</reference>
<reference key="2">
    <citation type="journal article" date="2004" name="Microbiology">
        <title>rexAB mutants in Streptococcus pneumoniae.</title>
        <authorList>
            <person name="Halpern D."/>
            <person name="Gruss A."/>
            <person name="Claverys J.-P."/>
            <person name="El-Karoui M."/>
        </authorList>
    </citation>
    <scope>FUNCTION</scope>
    <scope>DISRUPTION PHENOTYPE</scope>
    <source>
        <strain>R6 / R800</strain>
    </source>
</reference>
<keyword id="KW-0067">ATP-binding</keyword>
<keyword id="KW-0227">DNA damage</keyword>
<keyword id="KW-0234">DNA repair</keyword>
<keyword id="KW-0238">DNA-binding</keyword>
<keyword id="KW-0269">Exonuclease</keyword>
<keyword id="KW-0347">Helicase</keyword>
<keyword id="KW-0378">Hydrolase</keyword>
<keyword id="KW-0413">Isomerase</keyword>
<keyword id="KW-0540">Nuclease</keyword>
<keyword id="KW-0547">Nucleotide-binding</keyword>
<keyword id="KW-1185">Reference proteome</keyword>
<dbReference type="EC" id="3.1.-.-" evidence="1"/>
<dbReference type="EC" id="5.6.2.4" evidence="1"/>
<dbReference type="EMBL" id="AE005672">
    <property type="protein sequence ID" value="AAK75261.1"/>
    <property type="molecule type" value="Genomic_DNA"/>
</dbReference>
<dbReference type="PIR" id="D95133">
    <property type="entry name" value="D95133"/>
</dbReference>
<dbReference type="PIR" id="H98001">
    <property type="entry name" value="H98001"/>
</dbReference>
<dbReference type="RefSeq" id="WP_000767212.1">
    <property type="nucleotide sequence ID" value="NZ_CP155539.1"/>
</dbReference>
<dbReference type="SMR" id="Q97QP9"/>
<dbReference type="PaxDb" id="170187-SP_1152"/>
<dbReference type="EnsemblBacteria" id="AAK75261">
    <property type="protein sequence ID" value="AAK75261"/>
    <property type="gene ID" value="SP_1152"/>
</dbReference>
<dbReference type="KEGG" id="spn:SP_1152"/>
<dbReference type="eggNOG" id="COG1074">
    <property type="taxonomic scope" value="Bacteria"/>
</dbReference>
<dbReference type="PhylomeDB" id="Q97QP9"/>
<dbReference type="BioCyc" id="SPNE170187:G1FZB-1171-MONOMER"/>
<dbReference type="Proteomes" id="UP000000585">
    <property type="component" value="Chromosome"/>
</dbReference>
<dbReference type="GO" id="GO:0005829">
    <property type="term" value="C:cytosol"/>
    <property type="evidence" value="ECO:0007669"/>
    <property type="project" value="TreeGrafter"/>
</dbReference>
<dbReference type="GO" id="GO:0033202">
    <property type="term" value="C:DNA helicase complex"/>
    <property type="evidence" value="ECO:0007669"/>
    <property type="project" value="TreeGrafter"/>
</dbReference>
<dbReference type="GO" id="GO:0043138">
    <property type="term" value="F:3'-5' DNA helicase activity"/>
    <property type="evidence" value="ECO:0007669"/>
    <property type="project" value="UniProtKB-UniRule"/>
</dbReference>
<dbReference type="GO" id="GO:0008408">
    <property type="term" value="F:3'-5' exonuclease activity"/>
    <property type="evidence" value="ECO:0007669"/>
    <property type="project" value="UniProtKB-UniRule"/>
</dbReference>
<dbReference type="GO" id="GO:0005524">
    <property type="term" value="F:ATP binding"/>
    <property type="evidence" value="ECO:0007669"/>
    <property type="project" value="UniProtKB-UniRule"/>
</dbReference>
<dbReference type="GO" id="GO:0016887">
    <property type="term" value="F:ATP hydrolysis activity"/>
    <property type="evidence" value="ECO:0007669"/>
    <property type="project" value="RHEA"/>
</dbReference>
<dbReference type="GO" id="GO:0003690">
    <property type="term" value="F:double-stranded DNA binding"/>
    <property type="evidence" value="ECO:0007669"/>
    <property type="project" value="UniProtKB-UniRule"/>
</dbReference>
<dbReference type="GO" id="GO:0000724">
    <property type="term" value="P:double-strand break repair via homologous recombination"/>
    <property type="evidence" value="ECO:0007669"/>
    <property type="project" value="UniProtKB-UniRule"/>
</dbReference>
<dbReference type="CDD" id="cd17932">
    <property type="entry name" value="DEXQc_UvrD"/>
    <property type="match status" value="1"/>
</dbReference>
<dbReference type="FunFam" id="3.40.50.300:FF:001196">
    <property type="entry name" value="ATP-dependent helicase/nuclease subunit A"/>
    <property type="match status" value="1"/>
</dbReference>
<dbReference type="FunFam" id="3.40.50.300:FF:002351">
    <property type="entry name" value="ATP-dependent helicase/nuclease subunit A"/>
    <property type="match status" value="1"/>
</dbReference>
<dbReference type="FunFam" id="3.40.50.300:FF:002570">
    <property type="entry name" value="ATP-dependent helicase/nuclease subunit A"/>
    <property type="match status" value="1"/>
</dbReference>
<dbReference type="Gene3D" id="3.90.320.10">
    <property type="match status" value="1"/>
</dbReference>
<dbReference type="Gene3D" id="3.40.50.300">
    <property type="entry name" value="P-loop containing nucleotide triphosphate hydrolases"/>
    <property type="match status" value="4"/>
</dbReference>
<dbReference type="Gene3D" id="1.10.486.10">
    <property type="entry name" value="PCRA, domain 4"/>
    <property type="match status" value="1"/>
</dbReference>
<dbReference type="HAMAP" id="MF_01451">
    <property type="entry name" value="AddA"/>
    <property type="match status" value="1"/>
</dbReference>
<dbReference type="InterPro" id="IPR014152">
    <property type="entry name" value="AddA"/>
</dbReference>
<dbReference type="InterPro" id="IPR014017">
    <property type="entry name" value="DNA_helicase_UvrD-like_C"/>
</dbReference>
<dbReference type="InterPro" id="IPR000212">
    <property type="entry name" value="DNA_helicase_UvrD/REP"/>
</dbReference>
<dbReference type="InterPro" id="IPR027417">
    <property type="entry name" value="P-loop_NTPase"/>
</dbReference>
<dbReference type="InterPro" id="IPR011604">
    <property type="entry name" value="PDDEXK-like_dom_sf"/>
</dbReference>
<dbReference type="InterPro" id="IPR038726">
    <property type="entry name" value="PDDEXK_AddAB-type"/>
</dbReference>
<dbReference type="InterPro" id="IPR011335">
    <property type="entry name" value="Restrct_endonuc-II-like"/>
</dbReference>
<dbReference type="InterPro" id="IPR014016">
    <property type="entry name" value="UvrD-like_ATP-bd"/>
</dbReference>
<dbReference type="NCBIfam" id="TIGR02785">
    <property type="entry name" value="addA_Gpos"/>
    <property type="match status" value="1"/>
</dbReference>
<dbReference type="PANTHER" id="PTHR11070:SF48">
    <property type="entry name" value="ATP-DEPENDENT HELICASE_NUCLEASE SUBUNIT A"/>
    <property type="match status" value="1"/>
</dbReference>
<dbReference type="PANTHER" id="PTHR11070">
    <property type="entry name" value="UVRD / RECB / PCRA DNA HELICASE FAMILY MEMBER"/>
    <property type="match status" value="1"/>
</dbReference>
<dbReference type="Pfam" id="PF12705">
    <property type="entry name" value="PDDEXK_1"/>
    <property type="match status" value="1"/>
</dbReference>
<dbReference type="Pfam" id="PF00580">
    <property type="entry name" value="UvrD-helicase"/>
    <property type="match status" value="1"/>
</dbReference>
<dbReference type="Pfam" id="PF13361">
    <property type="entry name" value="UvrD_C"/>
    <property type="match status" value="1"/>
</dbReference>
<dbReference type="SUPFAM" id="SSF52540">
    <property type="entry name" value="P-loop containing nucleoside triphosphate hydrolases"/>
    <property type="match status" value="1"/>
</dbReference>
<dbReference type="SUPFAM" id="SSF52980">
    <property type="entry name" value="Restriction endonuclease-like"/>
    <property type="match status" value="1"/>
</dbReference>
<dbReference type="PROSITE" id="PS51198">
    <property type="entry name" value="UVRD_HELICASE_ATP_BIND"/>
    <property type="match status" value="1"/>
</dbReference>
<dbReference type="PROSITE" id="PS51217">
    <property type="entry name" value="UVRD_HELICASE_CTER"/>
    <property type="match status" value="1"/>
</dbReference>
<comment type="function">
    <text evidence="2">Involved in DNA double-strand break repair. Is not involved in recombination during natural competence or in plasmid establishment.</text>
</comment>
<comment type="function">
    <text evidence="1">The heterodimer acts as both an ATP-dependent DNA helicase and an ATP-dependent, dual-direction single-stranded exonuclease. Recognizes the chi site generating a DNA molecule suitable for the initiation of homologous recombination. The RexA (AddA) nuclease domain is required for chi fragment generation; this subunit has the helicase and 3' -&gt; 5' nuclease activities.</text>
</comment>
<comment type="catalytic activity">
    <reaction evidence="1">
        <text>Couples ATP hydrolysis with the unwinding of duplex DNA by translocating in the 3'-5' direction.</text>
        <dbReference type="EC" id="5.6.2.4"/>
    </reaction>
</comment>
<comment type="catalytic activity">
    <reaction evidence="1">
        <text>ATP + H2O = ADP + phosphate + H(+)</text>
        <dbReference type="Rhea" id="RHEA:13065"/>
        <dbReference type="ChEBI" id="CHEBI:15377"/>
        <dbReference type="ChEBI" id="CHEBI:15378"/>
        <dbReference type="ChEBI" id="CHEBI:30616"/>
        <dbReference type="ChEBI" id="CHEBI:43474"/>
        <dbReference type="ChEBI" id="CHEBI:456216"/>
        <dbReference type="EC" id="5.6.2.4"/>
    </reaction>
</comment>
<comment type="cofactor">
    <cofactor evidence="1">
        <name>Mg(2+)</name>
        <dbReference type="ChEBI" id="CHEBI:18420"/>
    </cofactor>
</comment>
<comment type="subunit">
    <text evidence="4">Heterodimer of RexA (AddA) and RexB.</text>
</comment>
<comment type="disruption phenotype">
    <text evidence="2">Cells lacking this gene grow poorly, are more sensitive to UV light than wild-type cells and have reduced double-strand exonuclease activity.</text>
</comment>
<comment type="similarity">
    <text evidence="1">Belongs to the helicase family. AddA subfamily.</text>
</comment>
<name>ADDA_STRPN</name>
<feature type="chain" id="PRO_0000379333" description="Exonuclease/helicase subunit RexA">
    <location>
        <begin position="1"/>
        <end position="1216"/>
    </location>
</feature>
<feature type="domain" description="UvrD-like helicase ATP-binding" evidence="1">
    <location>
        <begin position="26"/>
        <end position="488"/>
    </location>
</feature>
<feature type="domain" description="UvrD-like helicase C-terminal" evidence="1">
    <location>
        <begin position="515"/>
        <end position="802"/>
    </location>
</feature>
<feature type="binding site" evidence="1">
    <location>
        <begin position="47"/>
        <end position="54"/>
    </location>
    <ligand>
        <name>ATP</name>
        <dbReference type="ChEBI" id="CHEBI:30616"/>
    </ligand>
</feature>
<proteinExistence type="inferred from homology"/>
<protein>
    <recommendedName>
        <fullName evidence="3">Exonuclease/helicase subunit RexA</fullName>
        <ecNumber evidence="1">3.1.-.-</ecNumber>
        <ecNumber evidence="1">5.6.2.4</ecNumber>
    </recommendedName>
    <alternativeName>
        <fullName evidence="1">ATP-dependent helicase/deoxyribonuclease subunit A</fullName>
    </alternativeName>
    <alternativeName>
        <fullName evidence="1">DNA 3'-5' helicase AddA</fullName>
    </alternativeName>
</protein>
<organism>
    <name type="scientific">Streptococcus pneumoniae serotype 4 (strain ATCC BAA-334 / TIGR4)</name>
    <dbReference type="NCBI Taxonomy" id="170187"/>
    <lineage>
        <taxon>Bacteria</taxon>
        <taxon>Bacillati</taxon>
        <taxon>Bacillota</taxon>
        <taxon>Bacilli</taxon>
        <taxon>Lactobacillales</taxon>
        <taxon>Streptococcaceae</taxon>
        <taxon>Streptococcus</taxon>
    </lineage>
</organism>
<sequence>MKLIPFLSEEEIQKLQEAEANSSKEQKKTAEQIEAIYTSAQNILVSASAGSGKTFVMAERILDQLARGVEISQLFISTFTVKAATELKERLEKKISKKIQETDDVDLKQHLGRQLADLPNAAIGTMDSFTQKFLGKHGYLLDIAPNFRILQNQSEQLILENEVFHEVFEAHYQGKQKETFSHLLKNFAGRGKDERGLRQQVYKIYDFLQSTSNPQKWLSESFLKGFEKADFTSEKEKLTEQIKQALWDLESFFRYHLDNDAKEFAKAAYLENVQLILDEIGSLNQESDSQAYQAVLARVVAISKEKNGRALTNASRKADLKPLADAYNEERKTQFAKLGQLSDQIAILDYQERYHGDTWKLAKTFQSFMSDFVEAYRQRKRQENAFEFADISHYTIEILENFPQVRESYQERFHEVMVDEYQDTNHIQERMLELLSNGHNRFMVGDIKQSIYRFRQADPQIFNEKFQRYAQNPQEGRLIILKENFRSSSEVLSATNDVFERLMDQEVGEINYDNKHQLVFANTKLTPNPDNKAAFLLYDKDDTGEEEESQTETKLTGEMRLVIKEILKLHQEKGVAFKEIALLTSSRSRNDQILLALSEYGIPVKTDGEQNNYLQSLEVQVMLDTLRVIHNPLQDYALVALMKSPMFGFDEDELARLSLQKAEDKVHENLYEKLVNAQKMASSQKGLIHTALAEKLKQFMDILASWRLYAKTHSLYDLIWKIYNDRFYYDYVGALPNGPARQANLYALALRADQFEKSNFKGLSRFIRMIDQVLEAQHDLASVAVAPPKDAVELMTIHKSKGLEFPYVFILNMDQDFNKQDSMSEVILSRQNGLGVKYIAKMETGAVEDHYPKTIKLSIPSLTYRQNEEELQLASYSEQMRLLYVAMTRAEKKLYLVGKGSREKLESKEYPAAKNGKLNSNTRLQARNFQDWLWAISKVFTKDKLNFSYRFIGEDQLTREAIGELETKSPLQDSSQADNRQSDTIKEALEMLKEVEVYNTLHRAAIELPSVQTPSQIKKFYEPVMDMEGVEIAGQGQSVGKKISFDLPDFSTKEKVTGAEIGSATHELMQRIDLSQQLTLASLTETLKQVQTSQAVRDKINLDKILAFFDTVLGQEILANTDHLYREQPFSMLKRDQKSQEDFVVRGILDGYLLYENKIVLFDYKTDRYDEPSQLVDRYRGQLALYEEALSRAYSIENIEKYLILLGKDEVQVVKV</sequence>
<evidence type="ECO:0000255" key="1">
    <source>
        <dbReference type="HAMAP-Rule" id="MF_01451"/>
    </source>
</evidence>
<evidence type="ECO:0000269" key="2">
    <source>
    </source>
</evidence>
<evidence type="ECO:0000303" key="3">
    <source>
    </source>
</evidence>
<evidence type="ECO:0000305" key="4">
    <source>
    </source>
</evidence>
<gene>
    <name evidence="3" type="primary">rexA</name>
    <name evidence="1" type="synonym">addA</name>
    <name type="ordered locus">SP_1152</name>
</gene>